<sequence length="428" mass="46439">MSYIGLQQDSGEYKIQKIHAREILDSRGNPTVEVDVFTPKGFGRAGVPSGASTGTNEALELRDADPNRYGGKGVLTAVKNVNTIIQKELLGLDVRNQREIDELMIELDETDNKSNLGANAILGVSMAVARAAADSLNVPLYRYLGGSNAFTLPVPTMNVLNGGKHAGNDLAIQEFMIQPKGAETFYEALQIGAEIYHVLGKILEKKYGRSSTNVGYEGGYAPKMSESTEALDALAQAIEEAGYTDTEVTIGLDAAASEFYEDEAYAIDGKKLSAPELMDYYVELVNSYPILSIEDPFYEEAFEDFEALTNELWDTIIVGDDLFVTNIERLSKGVDMGAANALLLKVNQIGTISEAFDAANMASRNGYTVIVSHRSAETEDTTIADISVAIGAEMIKTGAPARGERTAKYNQLLRIEEDLGEVAHYVQL</sequence>
<proteinExistence type="inferred from homology"/>
<organism>
    <name type="scientific">Methanosarcina barkeri (strain Fusaro / DSM 804)</name>
    <dbReference type="NCBI Taxonomy" id="269797"/>
    <lineage>
        <taxon>Archaea</taxon>
        <taxon>Methanobacteriati</taxon>
        <taxon>Methanobacteriota</taxon>
        <taxon>Stenosarchaea group</taxon>
        <taxon>Methanomicrobia</taxon>
        <taxon>Methanosarcinales</taxon>
        <taxon>Methanosarcinaceae</taxon>
        <taxon>Methanosarcina</taxon>
    </lineage>
</organism>
<keyword id="KW-0963">Cytoplasm</keyword>
<keyword id="KW-0324">Glycolysis</keyword>
<keyword id="KW-0456">Lyase</keyword>
<keyword id="KW-0460">Magnesium</keyword>
<keyword id="KW-0479">Metal-binding</keyword>
<keyword id="KW-0964">Secreted</keyword>
<feature type="chain" id="PRO_0000267142" description="Enolase">
    <location>
        <begin position="1"/>
        <end position="428"/>
    </location>
</feature>
<feature type="active site" description="Proton donor" evidence="1">
    <location>
        <position position="217"/>
    </location>
</feature>
<feature type="active site" description="Proton acceptor" evidence="1">
    <location>
        <position position="345"/>
    </location>
</feature>
<feature type="binding site" evidence="1">
    <location>
        <position position="173"/>
    </location>
    <ligand>
        <name>(2R)-2-phosphoglycerate</name>
        <dbReference type="ChEBI" id="CHEBI:58289"/>
    </ligand>
</feature>
<feature type="binding site" evidence="1">
    <location>
        <position position="253"/>
    </location>
    <ligand>
        <name>Mg(2+)</name>
        <dbReference type="ChEBI" id="CHEBI:18420"/>
    </ligand>
</feature>
<feature type="binding site" evidence="1">
    <location>
        <position position="294"/>
    </location>
    <ligand>
        <name>Mg(2+)</name>
        <dbReference type="ChEBI" id="CHEBI:18420"/>
    </ligand>
</feature>
<feature type="binding site" evidence="1">
    <location>
        <position position="320"/>
    </location>
    <ligand>
        <name>Mg(2+)</name>
        <dbReference type="ChEBI" id="CHEBI:18420"/>
    </ligand>
</feature>
<feature type="binding site" evidence="1">
    <location>
        <position position="345"/>
    </location>
    <ligand>
        <name>(2R)-2-phosphoglycerate</name>
        <dbReference type="ChEBI" id="CHEBI:58289"/>
    </ligand>
</feature>
<feature type="binding site" evidence="1">
    <location>
        <position position="374"/>
    </location>
    <ligand>
        <name>(2R)-2-phosphoglycerate</name>
        <dbReference type="ChEBI" id="CHEBI:58289"/>
    </ligand>
</feature>
<feature type="binding site" evidence="1">
    <location>
        <position position="375"/>
    </location>
    <ligand>
        <name>(2R)-2-phosphoglycerate</name>
        <dbReference type="ChEBI" id="CHEBI:58289"/>
    </ligand>
</feature>
<feature type="binding site" evidence="1">
    <location>
        <position position="396"/>
    </location>
    <ligand>
        <name>(2R)-2-phosphoglycerate</name>
        <dbReference type="ChEBI" id="CHEBI:58289"/>
    </ligand>
</feature>
<name>ENO_METBF</name>
<comment type="function">
    <text evidence="1">Catalyzes the reversible conversion of 2-phosphoglycerate (2-PG) into phosphoenolpyruvate (PEP). It is essential for the degradation of carbohydrates via glycolysis.</text>
</comment>
<comment type="catalytic activity">
    <reaction evidence="1">
        <text>(2R)-2-phosphoglycerate = phosphoenolpyruvate + H2O</text>
        <dbReference type="Rhea" id="RHEA:10164"/>
        <dbReference type="ChEBI" id="CHEBI:15377"/>
        <dbReference type="ChEBI" id="CHEBI:58289"/>
        <dbReference type="ChEBI" id="CHEBI:58702"/>
        <dbReference type="EC" id="4.2.1.11"/>
    </reaction>
</comment>
<comment type="cofactor">
    <cofactor evidence="1">
        <name>Mg(2+)</name>
        <dbReference type="ChEBI" id="CHEBI:18420"/>
    </cofactor>
    <text evidence="1">Binds a second Mg(2+) ion via substrate during catalysis.</text>
</comment>
<comment type="pathway">
    <text evidence="1">Carbohydrate degradation; glycolysis; pyruvate from D-glyceraldehyde 3-phosphate: step 4/5.</text>
</comment>
<comment type="subcellular location">
    <subcellularLocation>
        <location evidence="1">Cytoplasm</location>
    </subcellularLocation>
    <subcellularLocation>
        <location evidence="1">Secreted</location>
    </subcellularLocation>
    <subcellularLocation>
        <location evidence="1">Cell surface</location>
    </subcellularLocation>
    <text evidence="1">Fractions of enolase are present in both the cytoplasm and on the cell surface.</text>
</comment>
<comment type="similarity">
    <text evidence="1">Belongs to the enolase family.</text>
</comment>
<accession>Q468E2</accession>
<reference key="1">
    <citation type="journal article" date="2006" name="J. Bacteriol.">
        <title>The Methanosarcina barkeri genome: comparative analysis with Methanosarcina acetivorans and Methanosarcina mazei reveals extensive rearrangement within methanosarcinal genomes.</title>
        <authorList>
            <person name="Maeder D.L."/>
            <person name="Anderson I."/>
            <person name="Brettin T.S."/>
            <person name="Bruce D.C."/>
            <person name="Gilna P."/>
            <person name="Han C.S."/>
            <person name="Lapidus A."/>
            <person name="Metcalf W.W."/>
            <person name="Saunders E."/>
            <person name="Tapia R."/>
            <person name="Sowers K.R."/>
        </authorList>
    </citation>
    <scope>NUCLEOTIDE SEQUENCE [LARGE SCALE GENOMIC DNA]</scope>
    <source>
        <strain>Fusaro / DSM 804</strain>
    </source>
</reference>
<protein>
    <recommendedName>
        <fullName evidence="1">Enolase</fullName>
        <ecNumber evidence="1">4.2.1.11</ecNumber>
    </recommendedName>
    <alternativeName>
        <fullName evidence="1">2-phospho-D-glycerate hydro-lyase</fullName>
    </alternativeName>
    <alternativeName>
        <fullName evidence="1">2-phosphoglycerate dehydratase</fullName>
    </alternativeName>
</protein>
<evidence type="ECO:0000255" key="1">
    <source>
        <dbReference type="HAMAP-Rule" id="MF_00318"/>
    </source>
</evidence>
<gene>
    <name evidence="1" type="primary">eno</name>
    <name type="ordered locus">Mbar_A2850</name>
</gene>
<dbReference type="EC" id="4.2.1.11" evidence="1"/>
<dbReference type="EMBL" id="CP000099">
    <property type="protein sequence ID" value="AAZ71750.1"/>
    <property type="molecule type" value="Genomic_DNA"/>
</dbReference>
<dbReference type="SMR" id="Q468E2"/>
<dbReference type="STRING" id="269797.Mbar_A2850"/>
<dbReference type="PaxDb" id="269797-Mbar_A2850"/>
<dbReference type="KEGG" id="mba:Mbar_A2850"/>
<dbReference type="eggNOG" id="arCOG01169">
    <property type="taxonomic scope" value="Archaea"/>
</dbReference>
<dbReference type="HOGENOM" id="CLU_031223_2_1_2"/>
<dbReference type="OrthoDB" id="8680at2157"/>
<dbReference type="UniPathway" id="UPA00109">
    <property type="reaction ID" value="UER00187"/>
</dbReference>
<dbReference type="GO" id="GO:0009986">
    <property type="term" value="C:cell surface"/>
    <property type="evidence" value="ECO:0007669"/>
    <property type="project" value="UniProtKB-SubCell"/>
</dbReference>
<dbReference type="GO" id="GO:0005576">
    <property type="term" value="C:extracellular region"/>
    <property type="evidence" value="ECO:0007669"/>
    <property type="project" value="UniProtKB-SubCell"/>
</dbReference>
<dbReference type="GO" id="GO:0000015">
    <property type="term" value="C:phosphopyruvate hydratase complex"/>
    <property type="evidence" value="ECO:0007669"/>
    <property type="project" value="InterPro"/>
</dbReference>
<dbReference type="GO" id="GO:0000287">
    <property type="term" value="F:magnesium ion binding"/>
    <property type="evidence" value="ECO:0007669"/>
    <property type="project" value="UniProtKB-UniRule"/>
</dbReference>
<dbReference type="GO" id="GO:0004634">
    <property type="term" value="F:phosphopyruvate hydratase activity"/>
    <property type="evidence" value="ECO:0007669"/>
    <property type="project" value="UniProtKB-UniRule"/>
</dbReference>
<dbReference type="GO" id="GO:0006096">
    <property type="term" value="P:glycolytic process"/>
    <property type="evidence" value="ECO:0007669"/>
    <property type="project" value="UniProtKB-UniRule"/>
</dbReference>
<dbReference type="CDD" id="cd03313">
    <property type="entry name" value="enolase"/>
    <property type="match status" value="1"/>
</dbReference>
<dbReference type="FunFam" id="3.30.390.10:FF:000001">
    <property type="entry name" value="Enolase"/>
    <property type="match status" value="1"/>
</dbReference>
<dbReference type="Gene3D" id="3.20.20.120">
    <property type="entry name" value="Enolase-like C-terminal domain"/>
    <property type="match status" value="1"/>
</dbReference>
<dbReference type="Gene3D" id="3.30.390.10">
    <property type="entry name" value="Enolase-like, N-terminal domain"/>
    <property type="match status" value="1"/>
</dbReference>
<dbReference type="HAMAP" id="MF_00318">
    <property type="entry name" value="Enolase"/>
    <property type="match status" value="1"/>
</dbReference>
<dbReference type="InterPro" id="IPR000941">
    <property type="entry name" value="Enolase"/>
</dbReference>
<dbReference type="InterPro" id="IPR036849">
    <property type="entry name" value="Enolase-like_C_sf"/>
</dbReference>
<dbReference type="InterPro" id="IPR029017">
    <property type="entry name" value="Enolase-like_N"/>
</dbReference>
<dbReference type="InterPro" id="IPR020810">
    <property type="entry name" value="Enolase_C"/>
</dbReference>
<dbReference type="InterPro" id="IPR020809">
    <property type="entry name" value="Enolase_CS"/>
</dbReference>
<dbReference type="InterPro" id="IPR020811">
    <property type="entry name" value="Enolase_N"/>
</dbReference>
<dbReference type="NCBIfam" id="TIGR01060">
    <property type="entry name" value="eno"/>
    <property type="match status" value="1"/>
</dbReference>
<dbReference type="PANTHER" id="PTHR11902">
    <property type="entry name" value="ENOLASE"/>
    <property type="match status" value="1"/>
</dbReference>
<dbReference type="PANTHER" id="PTHR11902:SF1">
    <property type="entry name" value="ENOLASE"/>
    <property type="match status" value="1"/>
</dbReference>
<dbReference type="Pfam" id="PF00113">
    <property type="entry name" value="Enolase_C"/>
    <property type="match status" value="1"/>
</dbReference>
<dbReference type="Pfam" id="PF03952">
    <property type="entry name" value="Enolase_N"/>
    <property type="match status" value="1"/>
</dbReference>
<dbReference type="PIRSF" id="PIRSF001400">
    <property type="entry name" value="Enolase"/>
    <property type="match status" value="1"/>
</dbReference>
<dbReference type="PRINTS" id="PR00148">
    <property type="entry name" value="ENOLASE"/>
</dbReference>
<dbReference type="SFLD" id="SFLDS00001">
    <property type="entry name" value="Enolase"/>
    <property type="match status" value="1"/>
</dbReference>
<dbReference type="SFLD" id="SFLDF00002">
    <property type="entry name" value="enolase"/>
    <property type="match status" value="1"/>
</dbReference>
<dbReference type="SMART" id="SM01192">
    <property type="entry name" value="Enolase_C"/>
    <property type="match status" value="1"/>
</dbReference>
<dbReference type="SMART" id="SM01193">
    <property type="entry name" value="Enolase_N"/>
    <property type="match status" value="1"/>
</dbReference>
<dbReference type="SUPFAM" id="SSF51604">
    <property type="entry name" value="Enolase C-terminal domain-like"/>
    <property type="match status" value="1"/>
</dbReference>
<dbReference type="SUPFAM" id="SSF54826">
    <property type="entry name" value="Enolase N-terminal domain-like"/>
    <property type="match status" value="1"/>
</dbReference>
<dbReference type="PROSITE" id="PS00164">
    <property type="entry name" value="ENOLASE"/>
    <property type="match status" value="1"/>
</dbReference>